<sequence>MEDPARTQDILGQLPILKAYNHILLGFALSEDISRESVVQALNAAALQLATSVPWIGGKVVNVGSGPGNTGLFRSVPCELFAPPNSILRVKDVTADYPSYEEIVSAKGPISMLDGSIIAPKPAFPVSYVDCESDPAPALLIQATFLKGGVLLDFAAQHNLSDGGGVIQMINLVATTLRGEKIPEKAIVQANRDRRDVIRLLDPAEPMLDHSHLVRPPPSAIPANPVVSPDNFIWQYFRFSASTLGALKNIASNPADFDPSVKFISTDDALCAFLWQRIATVRLRRRQTPDDLCKMTRAVDIRRTLQVPSEYMGVMVYNVSGRLPLGQLATASLARAASELRKALNSIDEYAVRSFATFVARQPDKSTLAYAGKFNPDVDMGVSSMASVPLYRADFGPLGAPGLVRRPNFAPVLSTIYVMPQTVEGDVDVLICLTREDIGALRADPEWTAYAEYIG</sequence>
<reference key="1">
    <citation type="journal article" date="2013" name="Appl. Microbiol. Biotechnol.">
        <title>ku70 and ku80 null mutants improve the gene targeting frequency in Monascus ruber M7.</title>
        <authorList>
            <person name="He Y."/>
            <person name="Liu Q."/>
            <person name="Shao Y."/>
            <person name="Chen F."/>
        </authorList>
    </citation>
    <scope>NUCLEOTIDE SEQUENCE [GENOMIC DNA]</scope>
    <source>
        <strain>M7</strain>
    </source>
</reference>
<reference key="2">
    <citation type="submission" date="2016-11" db="EMBL/GenBank/DDBJ databases">
        <authorList>
            <person name="Jaros S."/>
            <person name="Januszkiewicz K."/>
            <person name="Wedrychowicz H."/>
        </authorList>
    </citation>
    <scope>NUCLEOTIDE SEQUENCE [MRNA]</scope>
    <source>
        <strain>M7</strain>
    </source>
</reference>
<reference key="3">
    <citation type="journal article" date="1977" name="Plant Physiol.">
        <title>Pigmentation and antibacterial activity of fast neutron- and X-ray-induced strains of Monascus purpureus went.</title>
        <authorList>
            <person name="Wong H.C."/>
            <person name="Bau Y.S."/>
        </authorList>
    </citation>
    <scope>BIOTECHNOLOGY</scope>
</reference>
<reference key="4">
    <citation type="journal article" date="2005" name="Chem. Biodivers.">
        <title>Anti-tumor-initiating effects of monascin, an azaphilonoid pigment from the extract of Monascus pilosus fermented rice (red-mold rice).</title>
        <authorList>
            <person name="Akihisa T."/>
            <person name="Tokuda H."/>
            <person name="Ukiya M."/>
            <person name="Kiyota A."/>
            <person name="Yasukawa K."/>
            <person name="Sakamoto N."/>
            <person name="Kimura Y."/>
            <person name="Suzuki T."/>
            <person name="Takayasu J."/>
            <person name="Nishino H."/>
        </authorList>
    </citation>
    <scope>BIOTECHNOLOGY</scope>
</reference>
<reference key="5">
    <citation type="journal article" date="2006" name="Appl. Microbiol. Biotechnol.">
        <title>In vivo hypolipidemic effects and safety of low dosage Monascus powder in a hamster model of hyperlipidemia.</title>
        <authorList>
            <person name="Lee C.L."/>
            <person name="Tsai T.Y."/>
            <person name="Wang J.J."/>
            <person name="Pan T.M."/>
        </authorList>
    </citation>
    <scope>BIOTECHNOLOGY</scope>
</reference>
<reference key="6">
    <citation type="journal article" date="2010" name="J. Agric. Food Chem.">
        <title>Monascin and ankaflavin act as novel hypolipidemic and high-density lipoprotein cholesterol-raising agents in red mold dioscorea.</title>
        <authorList>
            <person name="Lee C.L."/>
            <person name="Kung Y.H."/>
            <person name="Wu C.L."/>
            <person name="Hsu Y.W."/>
            <person name="Pan T.M."/>
        </authorList>
    </citation>
    <scope>BIOTECHNOLOGY</scope>
</reference>
<reference key="7">
    <citation type="journal article" date="2012" name="Appl. Microbiol. Biotechnol.">
        <title>Development of Monascus fermentation technology for high hypolipidemic effect.</title>
        <authorList>
            <person name="Lee C.L."/>
            <person name="Pan T.M."/>
        </authorList>
    </citation>
    <scope>BIOTECHNOLOGY</scope>
</reference>
<reference key="8">
    <citation type="journal article" date="2016" name="Appl. Microbiol. Biotechnol.">
        <title>Identification and role analysis of an intermediate produced by a polygenic mutant of Monascus pigments cluster in Monascus ruber M7.</title>
        <authorList>
            <person name="Liu J."/>
            <person name="Zhou Y."/>
            <person name="Yi T."/>
            <person name="Zhao M."/>
            <person name="Xie N."/>
            <person name="Lei M."/>
            <person name="Liu Q."/>
            <person name="Shao Y."/>
            <person name="Chen F."/>
        </authorList>
    </citation>
    <scope>FUNCTION</scope>
    <scope>PATHWAY</scope>
</reference>
<reference key="9">
    <citation type="journal article" date="2017" name="Chem. Sci.">
        <title>Orange, red, yellow: biosynthesis of azaphilone pigments in Monascus fungi.</title>
        <authorList>
            <person name="Chen W."/>
            <person name="Chen R."/>
            <person name="Liu Q."/>
            <person name="He Y."/>
            <person name="He K."/>
            <person name="Ding X."/>
            <person name="Kang L."/>
            <person name="Guo X."/>
            <person name="Xie N."/>
            <person name="Zhou Y."/>
            <person name="Lu Y."/>
            <person name="Cox R.J."/>
            <person name="Molnar I."/>
            <person name="Li M."/>
            <person name="Shao Y."/>
            <person name="Chen F."/>
        </authorList>
    </citation>
    <scope>FUNCTION</scope>
    <scope>DISRUPTION PHENOTYPE</scope>
    <scope>CATALYTIC ACTIVITY</scope>
    <scope>PATHWAY</scope>
</reference>
<reference key="10">
    <citation type="journal article" date="2021" name="Front. Microbiol.">
        <title>An integrated approach to determine the boundaries of the azaphilone pigment biosynthetic gene cluster of Monascus ruber M7 gown on potato dextrose agar.</title>
        <authorList>
            <person name="Liu Q."/>
            <person name="Zhong S."/>
            <person name="Wang X."/>
            <person name="Gao S."/>
            <person name="Yang X."/>
            <person name="Chen F."/>
            <person name="Molnar I."/>
        </authorList>
    </citation>
    <scope>FUNCTION</scope>
    <scope>INDUCTION</scope>
</reference>
<reference key="11">
    <citation type="journal article" date="2023" name="Food Res. Intern.">
        <title>Improved natural food colorant production in the filamentous fungus Monascus ruber using CRISPR-based engineering.</title>
        <authorList>
            <person name="Ree Yoon H."/>
            <person name="Han S."/>
            <person name="Chul Shin S."/>
            <person name="Cheong Yeom S."/>
            <person name="Jin Kim H."/>
        </authorList>
    </citation>
    <scope>BIOTECHNOLOGY</scope>
</reference>
<gene>
    <name evidence="10" type="primary">pigD</name>
</gene>
<name>PIGD_MONRU</name>
<keyword id="KW-0012">Acyltransferase</keyword>
<keyword id="KW-0608">Pigment</keyword>
<keyword id="KW-0808">Transferase</keyword>
<dbReference type="EC" id="2.3.1.-" evidence="7"/>
<dbReference type="EMBL" id="KC561929">
    <property type="protein sequence ID" value="AGI63864.1"/>
    <property type="molecule type" value="Genomic_DNA"/>
</dbReference>
<dbReference type="EMBL" id="KY094932">
    <property type="protein sequence ID" value="ASC48674.1"/>
    <property type="molecule type" value="mRNA"/>
</dbReference>
<dbReference type="SMR" id="M9QUV5"/>
<dbReference type="GO" id="GO:0016747">
    <property type="term" value="F:acyltransferase activity, transferring groups other than amino-acyl groups"/>
    <property type="evidence" value="ECO:0007669"/>
    <property type="project" value="TreeGrafter"/>
</dbReference>
<dbReference type="GO" id="GO:0031409">
    <property type="term" value="F:pigment binding"/>
    <property type="evidence" value="ECO:0007669"/>
    <property type="project" value="UniProtKB-KW"/>
</dbReference>
<dbReference type="Gene3D" id="3.30.559.10">
    <property type="entry name" value="Chloramphenicol acetyltransferase-like domain"/>
    <property type="match status" value="2"/>
</dbReference>
<dbReference type="InterPro" id="IPR023213">
    <property type="entry name" value="CAT-like_dom_sf"/>
</dbReference>
<dbReference type="InterPro" id="IPR050317">
    <property type="entry name" value="Plant_Fungal_Acyltransferase"/>
</dbReference>
<dbReference type="InterPro" id="IPR054710">
    <property type="entry name" value="Tri101-like_N"/>
</dbReference>
<dbReference type="PANTHER" id="PTHR31642:SF270">
    <property type="entry name" value="O-ACYLTRANSFERASE AUSQ"/>
    <property type="match status" value="1"/>
</dbReference>
<dbReference type="PANTHER" id="PTHR31642">
    <property type="entry name" value="TRICHOTHECENE 3-O-ACETYLTRANSFERASE"/>
    <property type="match status" value="1"/>
</dbReference>
<dbReference type="Pfam" id="PF22664">
    <property type="entry name" value="TRI-like_N"/>
    <property type="match status" value="1"/>
</dbReference>
<feature type="chain" id="PRO_0000460207" description="O-acyltransferase pigD">
    <location>
        <begin position="1"/>
        <end position="455"/>
    </location>
</feature>
<comment type="function">
    <text evidence="6 7 8">O-acetyltransferase; part of the gene cluster that mediates the biosynthesis of azaphilone pigments (MonAzPs), a complex mixture of compounds with a common azaphilone skeleton very widely used as food colorants (PubMed:26946170, PubMed:28959415, PubMed:34220766). Within the pathway, pigD directly transfers the fatty acyl chain from the beta-ketoacyl-ACP produced by the pigJ-pigK fatty acid synthase (FAS) to the C-4 alcohol (PubMed:28959415). The first step of the pathway is performed by the nrPKS pigA that forms the hexaketide precursor from successive condensations of five malonyl-CoA units, with a simple acetyl-CoA starter unit. The role of esterase pigG is not clear, but it may play at most a supplementary role in the formation of the benzaldehyde produced by the pigA nrPKS. This very reactive benzaldehyde is intercepted by the pigC ketoreductase that to provide the first stable enzyme-free MonAzPs intermediate, 6-(4-hydroxy-2-oxopentyl)-3-methyl-2,4-dioxocyclohexane carbaldehyde, also known as M7PKS-1. The FAD-dependent monooxygenase pigN hydroxylates M7PKS-1 at C-4, which triggers the formation of the pyran ring. PigJ, pigK and pigD are involved in the acetylation of the pyran ring. PigJ and pigK form the two subunits of a dedicated fungal FAS that produces the side chain fatty acyl moiety of MonAzPs and pigD transfers the fatty acyl chain to the C-4 alcohol. PigM and pigO are involved in the elimination of the omega-1 alcohol. PigM acts as an O-acetyltransferase that synthesizes the putative O-11 acetyl intermediate whereas pigO eliminates acetic acid to yield an intermediate with a C10(11) double bond. The dehydration of the C-11 alcohol followed by the reduction of the C6(7) double bond by the NAD(P)H-dependent oxidoreductase pigE increases the electrophilicity of the C-5 ketone of the resulting acyl benzopyran. This in turn sets up the C-5 ketone for an intramolecular Knoevenagel aldol condensation with the C-20 enol of the side chain. This condensation affords the characteristic linear tricyclic carbon skeletons of the yellow pigments that serve as the common precursors for the classical yellow pigments monascin and ankaflavin, orange pigments rubopunctatin and monascorubrin, and red pigments ribropunctamine and monascorubramine. The FAD-dependent oxidoreductase pigF is especially invoved in the biosynthesis of orange and red pigments via desaturation of C6(7) (PubMed:28959415).</text>
</comment>
<comment type="pathway">
    <text evidence="6 7">Secondary metabolite biosynthesis.</text>
</comment>
<comment type="induction">
    <text evidence="8">Expression is positively regulated by the azaphilone pigments (MonAzPs) gene cluster-specific transcription regulator pigB.</text>
</comment>
<comment type="disruption phenotype">
    <text evidence="7">Leads to the accumulation of pyran intermediates devoid of the medium-chain fatty acyl moiety such as monascusone A.</text>
</comment>
<comment type="biotechnology">
    <text evidence="1 2 3 4 5 9">As colorants, MonAzPs are widely used in various food products for centuries (PubMed:37087240). Moreover, MonAzPs also possess wide-ranging biological activities such as antibacterial activity, preventing hypertension, lowering cholesterol levels, causing hypolipidemic effects, and displaying antiobesity and antitumor activities (PubMed:16283302, PubMed:16660141, PubMed:17191930, PubMed:20666456, PubMed:22562164).</text>
</comment>
<comment type="similarity">
    <text evidence="11">Belongs to the trichothecene 3-O-acetyltransferase family.</text>
</comment>
<protein>
    <recommendedName>
        <fullName evidence="10">O-acyltransferase pigD</fullName>
        <ecNumber evidence="7">2.3.1.-</ecNumber>
    </recommendedName>
    <alternativeName>
        <fullName evidence="10">Azaphilone pigments biosynthesis cluster protein D</fullName>
    </alternativeName>
</protein>
<evidence type="ECO:0000269" key="1">
    <source>
    </source>
</evidence>
<evidence type="ECO:0000269" key="2">
    <source>
    </source>
</evidence>
<evidence type="ECO:0000269" key="3">
    <source>
    </source>
</evidence>
<evidence type="ECO:0000269" key="4">
    <source>
    </source>
</evidence>
<evidence type="ECO:0000269" key="5">
    <source>
    </source>
</evidence>
<evidence type="ECO:0000269" key="6">
    <source>
    </source>
</evidence>
<evidence type="ECO:0000269" key="7">
    <source>
    </source>
</evidence>
<evidence type="ECO:0000269" key="8">
    <source>
    </source>
</evidence>
<evidence type="ECO:0000269" key="9">
    <source>
    </source>
</evidence>
<evidence type="ECO:0000303" key="10">
    <source>
    </source>
</evidence>
<evidence type="ECO:0000305" key="11"/>
<organism>
    <name type="scientific">Monascus ruber</name>
    <name type="common">Mold</name>
    <dbReference type="NCBI Taxonomy" id="89489"/>
    <lineage>
        <taxon>Eukaryota</taxon>
        <taxon>Fungi</taxon>
        <taxon>Dikarya</taxon>
        <taxon>Ascomycota</taxon>
        <taxon>Pezizomycotina</taxon>
        <taxon>Eurotiomycetes</taxon>
        <taxon>Eurotiomycetidae</taxon>
        <taxon>Eurotiales</taxon>
        <taxon>Aspergillaceae</taxon>
        <taxon>Monascus</taxon>
    </lineage>
</organism>
<accession>M9QUV5</accession>
<proteinExistence type="evidence at protein level"/>